<organism>
    <name type="scientific">Schizosaccharomyces japonicus (strain yFS275 / FY16936)</name>
    <name type="common">Fission yeast</name>
    <dbReference type="NCBI Taxonomy" id="402676"/>
    <lineage>
        <taxon>Eukaryota</taxon>
        <taxon>Fungi</taxon>
        <taxon>Dikarya</taxon>
        <taxon>Ascomycota</taxon>
        <taxon>Taphrinomycotina</taxon>
        <taxon>Schizosaccharomycetes</taxon>
        <taxon>Schizosaccharomycetales</taxon>
        <taxon>Schizosaccharomycetaceae</taxon>
        <taxon>Schizosaccharomyces</taxon>
    </lineage>
</organism>
<dbReference type="EMBL" id="KE651166">
    <property type="protein sequence ID" value="EEB07411.1"/>
    <property type="molecule type" value="Genomic_DNA"/>
</dbReference>
<dbReference type="RefSeq" id="XP_002173704.1">
    <property type="nucleotide sequence ID" value="XM_002173668.1"/>
</dbReference>
<dbReference type="SMR" id="B6K2N0"/>
<dbReference type="STRING" id="402676.B6K2N0"/>
<dbReference type="EnsemblFungi" id="EEB07411">
    <property type="protein sequence ID" value="EEB07411"/>
    <property type="gene ID" value="SJAG_02497"/>
</dbReference>
<dbReference type="GeneID" id="7049248"/>
<dbReference type="JaponicusDB" id="SJAG_02497">
    <property type="gene designation" value="nar1"/>
</dbReference>
<dbReference type="VEuPathDB" id="FungiDB:SJAG_02497"/>
<dbReference type="eggNOG" id="KOG2439">
    <property type="taxonomic scope" value="Eukaryota"/>
</dbReference>
<dbReference type="HOGENOM" id="CLU_018240_0_0_1"/>
<dbReference type="OMA" id="GYLHHVL"/>
<dbReference type="OrthoDB" id="10253113at2759"/>
<dbReference type="Proteomes" id="UP000001744">
    <property type="component" value="Unassembled WGS sequence"/>
</dbReference>
<dbReference type="GO" id="GO:0097361">
    <property type="term" value="C:cytosolic [4Fe-4S] assembly targeting complex"/>
    <property type="evidence" value="ECO:0000318"/>
    <property type="project" value="GO_Central"/>
</dbReference>
<dbReference type="GO" id="GO:0051539">
    <property type="term" value="F:4 iron, 4 sulfur cluster binding"/>
    <property type="evidence" value="ECO:0007669"/>
    <property type="project" value="UniProtKB-KW"/>
</dbReference>
<dbReference type="GO" id="GO:0051536">
    <property type="term" value="F:iron-sulfur cluster binding"/>
    <property type="evidence" value="ECO:0000250"/>
    <property type="project" value="UniProtKB"/>
</dbReference>
<dbReference type="GO" id="GO:0046872">
    <property type="term" value="F:metal ion binding"/>
    <property type="evidence" value="ECO:0007669"/>
    <property type="project" value="UniProtKB-KW"/>
</dbReference>
<dbReference type="GO" id="GO:0016226">
    <property type="term" value="P:iron-sulfur cluster assembly"/>
    <property type="evidence" value="ECO:0000250"/>
    <property type="project" value="UniProtKB"/>
</dbReference>
<dbReference type="Gene3D" id="3.30.70.20">
    <property type="match status" value="1"/>
</dbReference>
<dbReference type="Gene3D" id="3.40.50.1780">
    <property type="match status" value="1"/>
</dbReference>
<dbReference type="Gene3D" id="3.40.950.10">
    <property type="entry name" value="Fe-only Hydrogenase (Larger Subunit), Chain L, domain 3"/>
    <property type="match status" value="1"/>
</dbReference>
<dbReference type="InterPro" id="IPR050340">
    <property type="entry name" value="Cytosolic_Fe-S_CAF"/>
</dbReference>
<dbReference type="InterPro" id="IPR009016">
    <property type="entry name" value="Fe_hydrogenase"/>
</dbReference>
<dbReference type="InterPro" id="IPR004108">
    <property type="entry name" value="Fe_hydrogenase_lsu_C"/>
</dbReference>
<dbReference type="PANTHER" id="PTHR11615">
    <property type="entry name" value="NITRATE, FORMATE, IRON DEHYDROGENASE"/>
    <property type="match status" value="1"/>
</dbReference>
<dbReference type="Pfam" id="PF02906">
    <property type="entry name" value="Fe_hyd_lg_C"/>
    <property type="match status" value="1"/>
</dbReference>
<dbReference type="SUPFAM" id="SSF53920">
    <property type="entry name" value="Fe-only hydrogenase"/>
    <property type="match status" value="1"/>
</dbReference>
<proteinExistence type="inferred from homology"/>
<keyword id="KW-0004">4Fe-4S</keyword>
<keyword id="KW-0408">Iron</keyword>
<keyword id="KW-0411">Iron-sulfur</keyword>
<keyword id="KW-0479">Metal-binding</keyword>
<keyword id="KW-1185">Reference proteome</keyword>
<feature type="chain" id="PRO_0000383738" description="Cytosolic Fe-S cluster assembly factor NAR1 homolog">
    <location>
        <begin position="1"/>
        <end position="515"/>
    </location>
</feature>
<feature type="binding site" evidence="2">
    <location>
        <position position="19"/>
    </location>
    <ligand>
        <name>[4Fe-4S] cluster</name>
        <dbReference type="ChEBI" id="CHEBI:49883"/>
        <label>1</label>
    </ligand>
</feature>
<feature type="binding site" evidence="2">
    <location>
        <position position="65"/>
    </location>
    <ligand>
        <name>[4Fe-4S] cluster</name>
        <dbReference type="ChEBI" id="CHEBI:49883"/>
        <label>1</label>
    </ligand>
</feature>
<feature type="binding site" evidence="2">
    <location>
        <position position="68"/>
    </location>
    <ligand>
        <name>[4Fe-4S] cluster</name>
        <dbReference type="ChEBI" id="CHEBI:49883"/>
        <label>1</label>
    </ligand>
</feature>
<feature type="binding site" evidence="2">
    <location>
        <position position="71"/>
    </location>
    <ligand>
        <name>[4Fe-4S] cluster</name>
        <dbReference type="ChEBI" id="CHEBI:49883"/>
        <label>1</label>
    </ligand>
</feature>
<feature type="binding site" evidence="2">
    <location>
        <position position="192"/>
    </location>
    <ligand>
        <name>[4Fe-4S] cluster</name>
        <dbReference type="ChEBI" id="CHEBI:49883"/>
        <label>2</label>
    </ligand>
</feature>
<feature type="binding site" evidence="2">
    <location>
        <position position="247"/>
    </location>
    <ligand>
        <name>[4Fe-4S] cluster</name>
        <dbReference type="ChEBI" id="CHEBI:49883"/>
        <label>2</label>
    </ligand>
</feature>
<feature type="binding site" evidence="2">
    <location>
        <position position="428"/>
    </location>
    <ligand>
        <name>[4Fe-4S] cluster</name>
        <dbReference type="ChEBI" id="CHEBI:49883"/>
        <label>2</label>
    </ligand>
</feature>
<feature type="binding site" evidence="2">
    <location>
        <position position="432"/>
    </location>
    <ligand>
        <name>[4Fe-4S] cluster</name>
        <dbReference type="ChEBI" id="CHEBI:49883"/>
        <label>2</label>
    </ligand>
</feature>
<evidence type="ECO:0000250" key="1"/>
<evidence type="ECO:0000255" key="2"/>
<evidence type="ECO:0000305" key="3"/>
<accession>B6K2N0</accession>
<sequence length="515" mass="57428">MVKLSAEDLNDYLNPGVACVKPVKVQKKQDNQQNIKVNGESYYEVTKDTGEVEELGIASISLNDCLACSGCITSAESVLINLQSYHEVLKFVNAKEADDFFILQMSPQARASLAAYYNLSVQEVQLWIQSVFTNELKFNVVVDTGFSREISLRQAAIEFCQSWVAANAAKTVYNSKSGEVAPKPLPVLSSSCPGWICYVEKTHSSLIPHISTVRSPQQVAGRLLKDWFSYQLGISRKKIWVLSLMPCFDKKLEASRNDFVNEQVRDVDCVITPKELVELLKTKNISPQSMDLDSLSISEQTPCLPSWYEPVQFEQQNGSSSGGYLHYIMTFAAKALFDINDLTNRINVSQKNADMIEYELTSPDTGETLLRMATCYGFRNIQNLVRNVGRKSAPRRGRVLLKRMKNMSTSPSTGTGKQKLDYVEVMACPGGCINGGGQLPPPESSADFSGISREWMRQVEAHYFQPGVRQVDNAAVDAAVEHWLPSYSLQQSILHTKYHAVQNDTENPVALANTW</sequence>
<protein>
    <recommendedName>
        <fullName>Cytosolic Fe-S cluster assembly factor NAR1 homolog</fullName>
    </recommendedName>
    <alternativeName>
        <fullName>Nuclear architecture-related protein 1 homolog</fullName>
    </alternativeName>
</protein>
<gene>
    <name type="ORF">SJAG_02497</name>
</gene>
<name>NAR1_SCHJY</name>
<comment type="function">
    <text evidence="1">Component of the cytosolic Fe/S protein assembly machinery. Required for maturation of extramitochondrial Fe/S proteins. May play a role in the transfer of pre-assembled Fe/S clusters to target apoproteins (By similarity).</text>
</comment>
<comment type="similarity">
    <text evidence="3">Belongs to the NARF family.</text>
</comment>
<reference key="1">
    <citation type="journal article" date="2011" name="Science">
        <title>Comparative functional genomics of the fission yeasts.</title>
        <authorList>
            <person name="Rhind N."/>
            <person name="Chen Z."/>
            <person name="Yassour M."/>
            <person name="Thompson D.A."/>
            <person name="Haas B.J."/>
            <person name="Habib N."/>
            <person name="Wapinski I."/>
            <person name="Roy S."/>
            <person name="Lin M.F."/>
            <person name="Heiman D.I."/>
            <person name="Young S.K."/>
            <person name="Furuya K."/>
            <person name="Guo Y."/>
            <person name="Pidoux A."/>
            <person name="Chen H.M."/>
            <person name="Robbertse B."/>
            <person name="Goldberg J.M."/>
            <person name="Aoki K."/>
            <person name="Bayne E.H."/>
            <person name="Berlin A.M."/>
            <person name="Desjardins C.A."/>
            <person name="Dobbs E."/>
            <person name="Dukaj L."/>
            <person name="Fan L."/>
            <person name="FitzGerald M.G."/>
            <person name="French C."/>
            <person name="Gujja S."/>
            <person name="Hansen K."/>
            <person name="Keifenheim D."/>
            <person name="Levin J.Z."/>
            <person name="Mosher R.A."/>
            <person name="Mueller C.A."/>
            <person name="Pfiffner J."/>
            <person name="Priest M."/>
            <person name="Russ C."/>
            <person name="Smialowska A."/>
            <person name="Swoboda P."/>
            <person name="Sykes S.M."/>
            <person name="Vaughn M."/>
            <person name="Vengrova S."/>
            <person name="Yoder R."/>
            <person name="Zeng Q."/>
            <person name="Allshire R."/>
            <person name="Baulcombe D."/>
            <person name="Birren B.W."/>
            <person name="Brown W."/>
            <person name="Ekwall K."/>
            <person name="Kellis M."/>
            <person name="Leatherwood J."/>
            <person name="Levin H."/>
            <person name="Margalit H."/>
            <person name="Martienssen R."/>
            <person name="Nieduszynski C.A."/>
            <person name="Spatafora J.W."/>
            <person name="Friedman N."/>
            <person name="Dalgaard J.Z."/>
            <person name="Baumann P."/>
            <person name="Niki H."/>
            <person name="Regev A."/>
            <person name="Nusbaum C."/>
        </authorList>
    </citation>
    <scope>NUCLEOTIDE SEQUENCE [LARGE SCALE GENOMIC DNA]</scope>
    <source>
        <strain>yFS275 / FY16936</strain>
    </source>
</reference>